<accession>E9PT37</accession>
<accession>C1IEE3</accession>
<protein>
    <recommendedName>
        <fullName evidence="16">RNA-binding protein 20</fullName>
    </recommendedName>
    <alternativeName>
        <fullName evidence="16">RNA-binding motif protein 20</fullName>
    </alternativeName>
</protein>
<reference key="1">
    <citation type="journal article" date="2012" name="Nat. Med.">
        <title>RBM20, a gene for hereditary cardiomyopathy, regulates titin splicing.</title>
        <authorList>
            <person name="Guo W."/>
            <person name="Schafer S."/>
            <person name="Greaser M.L."/>
            <person name="Radke M.H."/>
            <person name="Liss M."/>
            <person name="Govindarajan T."/>
            <person name="Maatz H."/>
            <person name="Schulz H."/>
            <person name="Li S."/>
            <person name="Parrish A.M."/>
            <person name="Dauksaite V."/>
            <person name="Vakeel P."/>
            <person name="Klaassen S."/>
            <person name="Gerull B."/>
            <person name="Thierfelder L."/>
            <person name="Regitz-Zagrosek V."/>
            <person name="Hacker T.A."/>
            <person name="Saupe K.W."/>
            <person name="Dec G.W."/>
            <person name="Ellinor P.T."/>
            <person name="MacRae C.A."/>
            <person name="Spallek B."/>
            <person name="Fischer R."/>
            <person name="Perrot A."/>
            <person name="Ozcelik C."/>
            <person name="Saar K."/>
            <person name="Hubner N."/>
            <person name="Gotthardt M."/>
        </authorList>
    </citation>
    <scope>NUCLEOTIDE SEQUENCE [MRNA]</scope>
    <scope>FUNCTION</scope>
    <scope>DISRUPTION PHENOTYPE</scope>
    <source>
        <strain>Brown Norway</strain>
    </source>
</reference>
<reference key="2">
    <citation type="journal article" date="2004" name="Nature">
        <title>Genome sequence of the Brown Norway rat yields insights into mammalian evolution.</title>
        <authorList>
            <person name="Gibbs R.A."/>
            <person name="Weinstock G.M."/>
            <person name="Metzker M.L."/>
            <person name="Muzny D.M."/>
            <person name="Sodergren E.J."/>
            <person name="Scherer S."/>
            <person name="Scott G."/>
            <person name="Steffen D."/>
            <person name="Worley K.C."/>
            <person name="Burch P.E."/>
            <person name="Okwuonu G."/>
            <person name="Hines S."/>
            <person name="Lewis L."/>
            <person name="Deramo C."/>
            <person name="Delgado O."/>
            <person name="Dugan-Rocha S."/>
            <person name="Miner G."/>
            <person name="Morgan M."/>
            <person name="Hawes A."/>
            <person name="Gill R."/>
            <person name="Holt R.A."/>
            <person name="Adams M.D."/>
            <person name="Amanatides P.G."/>
            <person name="Baden-Tillson H."/>
            <person name="Barnstead M."/>
            <person name="Chin S."/>
            <person name="Evans C.A."/>
            <person name="Ferriera S."/>
            <person name="Fosler C."/>
            <person name="Glodek A."/>
            <person name="Gu Z."/>
            <person name="Jennings D."/>
            <person name="Kraft C.L."/>
            <person name="Nguyen T."/>
            <person name="Pfannkoch C.M."/>
            <person name="Sitter C."/>
            <person name="Sutton G.G."/>
            <person name="Venter J.C."/>
            <person name="Woodage T."/>
            <person name="Smith D."/>
            <person name="Lee H.-M."/>
            <person name="Gustafson E."/>
            <person name="Cahill P."/>
            <person name="Kana A."/>
            <person name="Doucette-Stamm L."/>
            <person name="Weinstock K."/>
            <person name="Fechtel K."/>
            <person name="Weiss R.B."/>
            <person name="Dunn D.M."/>
            <person name="Green E.D."/>
            <person name="Blakesley R.W."/>
            <person name="Bouffard G.G."/>
            <person name="De Jong P.J."/>
            <person name="Osoegawa K."/>
            <person name="Zhu B."/>
            <person name="Marra M."/>
            <person name="Schein J."/>
            <person name="Bosdet I."/>
            <person name="Fjell C."/>
            <person name="Jones S."/>
            <person name="Krzywinski M."/>
            <person name="Mathewson C."/>
            <person name="Siddiqui A."/>
            <person name="Wye N."/>
            <person name="McPherson J."/>
            <person name="Zhao S."/>
            <person name="Fraser C.M."/>
            <person name="Shetty J."/>
            <person name="Shatsman S."/>
            <person name="Geer K."/>
            <person name="Chen Y."/>
            <person name="Abramzon S."/>
            <person name="Nierman W.C."/>
            <person name="Havlak P.H."/>
            <person name="Chen R."/>
            <person name="Durbin K.J."/>
            <person name="Egan A."/>
            <person name="Ren Y."/>
            <person name="Song X.-Z."/>
            <person name="Li B."/>
            <person name="Liu Y."/>
            <person name="Qin X."/>
            <person name="Cawley S."/>
            <person name="Cooney A.J."/>
            <person name="D'Souza L.M."/>
            <person name="Martin K."/>
            <person name="Wu J.Q."/>
            <person name="Gonzalez-Garay M.L."/>
            <person name="Jackson A.R."/>
            <person name="Kalafus K.J."/>
            <person name="McLeod M.P."/>
            <person name="Milosavljevic A."/>
            <person name="Virk D."/>
            <person name="Volkov A."/>
            <person name="Wheeler D.A."/>
            <person name="Zhang Z."/>
            <person name="Bailey J.A."/>
            <person name="Eichler E.E."/>
            <person name="Tuzun E."/>
            <person name="Birney E."/>
            <person name="Mongin E."/>
            <person name="Ureta-Vidal A."/>
            <person name="Woodwark C."/>
            <person name="Zdobnov E."/>
            <person name="Bork P."/>
            <person name="Suyama M."/>
            <person name="Torrents D."/>
            <person name="Alexandersson M."/>
            <person name="Trask B.J."/>
            <person name="Young J.M."/>
            <person name="Huang H."/>
            <person name="Wang H."/>
            <person name="Xing H."/>
            <person name="Daniels S."/>
            <person name="Gietzen D."/>
            <person name="Schmidt J."/>
            <person name="Stevens K."/>
            <person name="Vitt U."/>
            <person name="Wingrove J."/>
            <person name="Camara F."/>
            <person name="Mar Alba M."/>
            <person name="Abril J.F."/>
            <person name="Guigo R."/>
            <person name="Smit A."/>
            <person name="Dubchak I."/>
            <person name="Rubin E.M."/>
            <person name="Couronne O."/>
            <person name="Poliakov A."/>
            <person name="Huebner N."/>
            <person name="Ganten D."/>
            <person name="Goesele C."/>
            <person name="Hummel O."/>
            <person name="Kreitler T."/>
            <person name="Lee Y.-A."/>
            <person name="Monti J."/>
            <person name="Schulz H."/>
            <person name="Zimdahl H."/>
            <person name="Himmelbauer H."/>
            <person name="Lehrach H."/>
            <person name="Jacob H.J."/>
            <person name="Bromberg S."/>
            <person name="Gullings-Handley J."/>
            <person name="Jensen-Seaman M.I."/>
            <person name="Kwitek A.E."/>
            <person name="Lazar J."/>
            <person name="Pasko D."/>
            <person name="Tonellato P.J."/>
            <person name="Twigger S."/>
            <person name="Ponting C.P."/>
            <person name="Duarte J.M."/>
            <person name="Rice S."/>
            <person name="Goodstadt L."/>
            <person name="Beatson S.A."/>
            <person name="Emes R.D."/>
            <person name="Winter E.E."/>
            <person name="Webber C."/>
            <person name="Brandt P."/>
            <person name="Nyakatura G."/>
            <person name="Adetobi M."/>
            <person name="Chiaromonte F."/>
            <person name="Elnitski L."/>
            <person name="Eswara P."/>
            <person name="Hardison R.C."/>
            <person name="Hou M."/>
            <person name="Kolbe D."/>
            <person name="Makova K."/>
            <person name="Miller W."/>
            <person name="Nekrutenko A."/>
            <person name="Riemer C."/>
            <person name="Schwartz S."/>
            <person name="Taylor J."/>
            <person name="Yang S."/>
            <person name="Zhang Y."/>
            <person name="Lindpaintner K."/>
            <person name="Andrews T.D."/>
            <person name="Caccamo M."/>
            <person name="Clamp M."/>
            <person name="Clarke L."/>
            <person name="Curwen V."/>
            <person name="Durbin R.M."/>
            <person name="Eyras E."/>
            <person name="Searle S.M."/>
            <person name="Cooper G.M."/>
            <person name="Batzoglou S."/>
            <person name="Brudno M."/>
            <person name="Sidow A."/>
            <person name="Stone E.A."/>
            <person name="Payseur B.A."/>
            <person name="Bourque G."/>
            <person name="Lopez-Otin C."/>
            <person name="Puente X.S."/>
            <person name="Chakrabarti K."/>
            <person name="Chatterji S."/>
            <person name="Dewey C."/>
            <person name="Pachter L."/>
            <person name="Bray N."/>
            <person name="Yap V.B."/>
            <person name="Caspi A."/>
            <person name="Tesler G."/>
            <person name="Pevzner P.A."/>
            <person name="Haussler D."/>
            <person name="Roskin K.M."/>
            <person name="Baertsch R."/>
            <person name="Clawson H."/>
            <person name="Furey T.S."/>
            <person name="Hinrichs A.S."/>
            <person name="Karolchik D."/>
            <person name="Kent W.J."/>
            <person name="Rosenbloom K.R."/>
            <person name="Trumbower H."/>
            <person name="Weirauch M."/>
            <person name="Cooper D.N."/>
            <person name="Stenson P.D."/>
            <person name="Ma B."/>
            <person name="Brent M."/>
            <person name="Arumugam M."/>
            <person name="Shteynberg D."/>
            <person name="Copley R.R."/>
            <person name="Taylor M.S."/>
            <person name="Riethman H."/>
            <person name="Mudunuri U."/>
            <person name="Peterson J."/>
            <person name="Guyer M."/>
            <person name="Felsenfeld A."/>
            <person name="Old S."/>
            <person name="Mockrin S."/>
            <person name="Collins F.S."/>
        </authorList>
    </citation>
    <scope>NUCLEOTIDE SEQUENCE [LARGE SCALE GENOMIC DNA]</scope>
    <source>
        <strain>Brown Norway</strain>
    </source>
</reference>
<reference key="3">
    <citation type="journal article" date="2012" name="Nat. Commun.">
        <title>Quantitative maps of protein phosphorylation sites across 14 different rat organs and tissues.</title>
        <authorList>
            <person name="Lundby A."/>
            <person name="Secher A."/>
            <person name="Lage K."/>
            <person name="Nordsborg N.B."/>
            <person name="Dmytriyev A."/>
            <person name="Lundby C."/>
            <person name="Olsen J.V."/>
        </authorList>
    </citation>
    <scope>PHOSPHORYLATION [LARGE SCALE ANALYSIS] AT SER-963; SER-1057; SER-1096; SER-1101 AND SER-1192</scope>
    <scope>IDENTIFICATION BY MASS SPECTROMETRY [LARGE SCALE ANALYSIS]</scope>
</reference>
<reference key="4">
    <citation type="journal article" date="2013" name="Nucleic Acids Res.">
        <title>Rbm20 regulates titin alternative splicing as a splicing repressor.</title>
        <authorList>
            <person name="Li S."/>
            <person name="Guo W."/>
            <person name="Dewey C.N."/>
            <person name="Greaser M.L."/>
        </authorList>
    </citation>
    <scope>FUNCTION</scope>
    <scope>SUBCELLULAR LOCATION</scope>
</reference>
<reference key="5">
    <citation type="journal article" date="2013" name="PLoS ONE">
        <title>Pathophysiological defects and transcriptional profiling in the RBM20-/- rat model.</title>
        <authorList>
            <person name="Guo W."/>
            <person name="Pleitner J.M."/>
            <person name="Saupe K.W."/>
            <person name="Greaser M.L."/>
        </authorList>
    </citation>
    <scope>FUNCTION</scope>
    <scope>DISRUPTION PHENOTYPE</scope>
</reference>
<reference key="6">
    <citation type="journal article" date="2014" name="J. Clin. Invest.">
        <title>RNA-binding protein RBM20 represses splicing to orchestrate cardiac pre-mRNA processing.</title>
        <authorList>
            <person name="Maatz H."/>
            <person name="Jens M."/>
            <person name="Liss M."/>
            <person name="Schafer S."/>
            <person name="Heinig M."/>
            <person name="Kirchner M."/>
            <person name="Adami E."/>
            <person name="Rintisch C."/>
            <person name="Dauksaite V."/>
            <person name="Radke M.H."/>
            <person name="Selbach M."/>
            <person name="Barton P.J."/>
            <person name="Cook S.A."/>
            <person name="Rajewsky N."/>
            <person name="Gotthardt M."/>
            <person name="Landthaler M."/>
            <person name="Hubner N."/>
        </authorList>
    </citation>
    <scope>FUNCTION</scope>
</reference>
<reference key="7">
    <citation type="journal article" date="2015" name="J. Mol. Cell Biol.">
        <title>RBM20 is an essential factor for thyroid hormone-regulated titin isoform transition.</title>
        <authorList>
            <person name="Zhu C."/>
            <person name="Yin Z."/>
            <person name="Ren J."/>
            <person name="McCormick R.J."/>
            <person name="Ford S.P."/>
            <person name="Guo W."/>
        </authorList>
    </citation>
    <scope>FUNCTION</scope>
</reference>
<reference key="8">
    <citation type="journal article" date="2016" name="FEBS Lett.">
        <title>RBM20 and RBM24 cooperatively promote the expression of short enh splice variants.</title>
        <authorList>
            <person name="Ito J."/>
            <person name="Iijima M."/>
            <person name="Yoshimoto N."/>
            <person name="Niimi T."/>
            <person name="Kuroda S."/>
            <person name="Maturana A.D."/>
        </authorList>
    </citation>
    <scope>FUNCTION</scope>
</reference>
<reference key="9">
    <citation type="journal article" date="2021" name="Int. J. Mol. Sci.">
        <title>RBM20-mediated pre-mRNA splicing has muscle-specificity and differential hormonal responses between muscles and in muscle cell cultures.</title>
        <authorList>
            <person name="Maimaiti R."/>
            <person name="Zhu C."/>
            <person name="Zhang Y."/>
            <person name="Ding Q."/>
            <person name="Guo W."/>
        </authorList>
    </citation>
    <scope>FUNCTION</scope>
</reference>
<reference key="10">
    <citation type="journal article" date="2022" name="FASEB J.">
        <title>RBM20 phosphorylation and its role in nucleocytoplasmic transport and cardiac pathogenesis.</title>
        <authorList>
            <person name="Zhang Y."/>
            <person name="Wang C."/>
            <person name="Sun M."/>
            <person name="Jin Y."/>
            <person name="Braz C.U."/>
            <person name="Khatib H."/>
            <person name="Hacker T.A."/>
            <person name="Liss M."/>
            <person name="Gotthardt M."/>
            <person name="Granzier H."/>
            <person name="Ge Y."/>
            <person name="Guo W."/>
        </authorList>
    </citation>
    <scope>FUNCTION</scope>
    <scope>SUBCELLULAR LOCATION</scope>
    <scope>PHOSPHORYLATION AT SER-638; SER-640; SER-643; SER-645; SER-652; SER-729; SER-789; SER-879; SER-881; SER-999; SER-1034; SER-1046; SER-1057; SER-1096; SER-1190 AND SER-1192</scope>
    <scope>MUTAGENESIS OF SER-638; SER-640; SER-643; SER-645; SER-652; SER-729; SER-789; SER-879; SER-881; SER-999; SER-1034; SER-1046; SER-1057; SER-1096; SER-1190 AND SER-1192</scope>
</reference>
<proteinExistence type="evidence at protein level"/>
<evidence type="ECO:0000250" key="1">
    <source>
        <dbReference type="UniProtKB" id="Q3UQS8"/>
    </source>
</evidence>
<evidence type="ECO:0000250" key="2">
    <source>
        <dbReference type="UniProtKB" id="Q5T481"/>
    </source>
</evidence>
<evidence type="ECO:0000255" key="3"/>
<evidence type="ECO:0000255" key="4">
    <source>
        <dbReference type="PROSITE-ProRule" id="PRU00130"/>
    </source>
</evidence>
<evidence type="ECO:0000255" key="5">
    <source>
        <dbReference type="PROSITE-ProRule" id="PRU00176"/>
    </source>
</evidence>
<evidence type="ECO:0000256" key="6">
    <source>
        <dbReference type="SAM" id="MobiDB-lite"/>
    </source>
</evidence>
<evidence type="ECO:0000269" key="7">
    <source>
    </source>
</evidence>
<evidence type="ECO:0000269" key="8">
    <source>
    </source>
</evidence>
<evidence type="ECO:0000269" key="9">
    <source>
    </source>
</evidence>
<evidence type="ECO:0000269" key="10">
    <source>
    </source>
</evidence>
<evidence type="ECO:0000269" key="11">
    <source>
    </source>
</evidence>
<evidence type="ECO:0000269" key="12">
    <source>
    </source>
</evidence>
<evidence type="ECO:0000269" key="13">
    <source>
    </source>
</evidence>
<evidence type="ECO:0000269" key="14">
    <source>
    </source>
</evidence>
<evidence type="ECO:0000303" key="15">
    <source>
    </source>
</evidence>
<evidence type="ECO:0000305" key="16"/>
<evidence type="ECO:0000312" key="17">
    <source>
        <dbReference type="RGD" id="1307427"/>
    </source>
</evidence>
<evidence type="ECO:0007744" key="18">
    <source>
    </source>
</evidence>
<dbReference type="EMBL" id="EU562301">
    <property type="protein sequence ID" value="ACD80091.1"/>
    <property type="molecule type" value="mRNA"/>
</dbReference>
<dbReference type="RefSeq" id="NP_001101081.2">
    <property type="nucleotide sequence ID" value="NM_001107611.2"/>
</dbReference>
<dbReference type="SMR" id="E9PT37"/>
<dbReference type="FunCoup" id="E9PT37">
    <property type="interactions" value="817"/>
</dbReference>
<dbReference type="STRING" id="10116.ENSRNOP00000051570"/>
<dbReference type="GlyGen" id="E9PT37">
    <property type="glycosylation" value="1 site"/>
</dbReference>
<dbReference type="iPTMnet" id="E9PT37"/>
<dbReference type="PhosphoSitePlus" id="E9PT37"/>
<dbReference type="PaxDb" id="10116-ENSRNOP00000051570"/>
<dbReference type="Ensembl" id="ENSRNOT00000054685.3">
    <property type="protein sequence ID" value="ENSRNOP00000051570.2"/>
    <property type="gene ID" value="ENSRNOG00000014705.7"/>
</dbReference>
<dbReference type="GeneID" id="309544"/>
<dbReference type="KEGG" id="rno:309544"/>
<dbReference type="UCSC" id="RGD:1307427">
    <property type="organism name" value="rat"/>
</dbReference>
<dbReference type="AGR" id="RGD:1307427"/>
<dbReference type="CTD" id="282996"/>
<dbReference type="RGD" id="1307427">
    <property type="gene designation" value="Rbm20"/>
</dbReference>
<dbReference type="eggNOG" id="ENOG502QW62">
    <property type="taxonomic scope" value="Eukaryota"/>
</dbReference>
<dbReference type="GeneTree" id="ENSGT01030000234642"/>
<dbReference type="HOGENOM" id="CLU_007364_0_0_1"/>
<dbReference type="InParanoid" id="E9PT37"/>
<dbReference type="OMA" id="PTRADWG"/>
<dbReference type="OrthoDB" id="61397at9989"/>
<dbReference type="TreeFam" id="TF333921"/>
<dbReference type="PRO" id="PR:E9PT37"/>
<dbReference type="Proteomes" id="UP000002494">
    <property type="component" value="Chromosome 1"/>
</dbReference>
<dbReference type="Bgee" id="ENSRNOG00000014705">
    <property type="expression patterns" value="Expressed in heart and 16 other cell types or tissues"/>
</dbReference>
<dbReference type="GO" id="GO:0036464">
    <property type="term" value="C:cytoplasmic ribonucleoprotein granule"/>
    <property type="evidence" value="ECO:0000314"/>
    <property type="project" value="UniProtKB"/>
</dbReference>
<dbReference type="GO" id="GO:0005634">
    <property type="term" value="C:nucleus"/>
    <property type="evidence" value="ECO:0000314"/>
    <property type="project" value="UniProtKB"/>
</dbReference>
<dbReference type="GO" id="GO:0003729">
    <property type="term" value="F:mRNA binding"/>
    <property type="evidence" value="ECO:0000318"/>
    <property type="project" value="GO_Central"/>
</dbReference>
<dbReference type="GO" id="GO:0097157">
    <property type="term" value="F:pre-mRNA intronic binding"/>
    <property type="evidence" value="ECO:0000314"/>
    <property type="project" value="UniProtKB"/>
</dbReference>
<dbReference type="GO" id="GO:0003723">
    <property type="term" value="F:RNA binding"/>
    <property type="evidence" value="ECO:0000250"/>
    <property type="project" value="UniProtKB"/>
</dbReference>
<dbReference type="GO" id="GO:1990935">
    <property type="term" value="F:splicing factor binding"/>
    <property type="evidence" value="ECO:0000250"/>
    <property type="project" value="UniProtKB"/>
</dbReference>
<dbReference type="GO" id="GO:0008270">
    <property type="term" value="F:zinc ion binding"/>
    <property type="evidence" value="ECO:0007669"/>
    <property type="project" value="UniProtKB-KW"/>
</dbReference>
<dbReference type="GO" id="GO:0060914">
    <property type="term" value="P:heart formation"/>
    <property type="evidence" value="ECO:0000314"/>
    <property type="project" value="UniProtKB"/>
</dbReference>
<dbReference type="GO" id="GO:0048025">
    <property type="term" value="P:negative regulation of mRNA splicing, via spliceosome"/>
    <property type="evidence" value="ECO:0000314"/>
    <property type="project" value="UniProtKB"/>
</dbReference>
<dbReference type="GO" id="GO:0033120">
    <property type="term" value="P:positive regulation of RNA splicing"/>
    <property type="evidence" value="ECO:0000266"/>
    <property type="project" value="RGD"/>
</dbReference>
<dbReference type="GO" id="GO:0000381">
    <property type="term" value="P:regulation of alternative mRNA splicing, via spliceosome"/>
    <property type="evidence" value="ECO:0000314"/>
    <property type="project" value="UniProtKB"/>
</dbReference>
<dbReference type="GO" id="GO:0048024">
    <property type="term" value="P:regulation of mRNA splicing, via spliceosome"/>
    <property type="evidence" value="ECO:0000266"/>
    <property type="project" value="RGD"/>
</dbReference>
<dbReference type="GO" id="GO:0043484">
    <property type="term" value="P:regulation of RNA splicing"/>
    <property type="evidence" value="ECO:0000315"/>
    <property type="project" value="UniProtKB"/>
</dbReference>
<dbReference type="GO" id="GO:0160091">
    <property type="term" value="P:spliceosome-depend formation of circular RNA"/>
    <property type="evidence" value="ECO:0000266"/>
    <property type="project" value="RGD"/>
</dbReference>
<dbReference type="CDD" id="cd12685">
    <property type="entry name" value="RRM_RBM20"/>
    <property type="match status" value="1"/>
</dbReference>
<dbReference type="FunFam" id="3.30.70.330:FF:000270">
    <property type="entry name" value="RNA binding motif protein 20"/>
    <property type="match status" value="1"/>
</dbReference>
<dbReference type="Gene3D" id="3.30.70.330">
    <property type="match status" value="1"/>
</dbReference>
<dbReference type="InterPro" id="IPR000690">
    <property type="entry name" value="Matrin/U1-C_Znf_C2H2"/>
</dbReference>
<dbReference type="InterPro" id="IPR003604">
    <property type="entry name" value="Matrin/U1-like-C_Znf_C2H2"/>
</dbReference>
<dbReference type="InterPro" id="IPR012677">
    <property type="entry name" value="Nucleotide-bd_a/b_plait_sf"/>
</dbReference>
<dbReference type="InterPro" id="IPR035979">
    <property type="entry name" value="RBD_domain_sf"/>
</dbReference>
<dbReference type="InterPro" id="IPR034790">
    <property type="entry name" value="RBM20_RRM"/>
</dbReference>
<dbReference type="InterPro" id="IPR000504">
    <property type="entry name" value="RRM_dom"/>
</dbReference>
<dbReference type="PANTHER" id="PTHR15592">
    <property type="entry name" value="MATRIN 3/NUCLEAR PROTEIN 220-RELATED"/>
    <property type="match status" value="1"/>
</dbReference>
<dbReference type="SMART" id="SM00360">
    <property type="entry name" value="RRM"/>
    <property type="match status" value="1"/>
</dbReference>
<dbReference type="SMART" id="SM00451">
    <property type="entry name" value="ZnF_U1"/>
    <property type="match status" value="2"/>
</dbReference>
<dbReference type="SUPFAM" id="SSF54928">
    <property type="entry name" value="RNA-binding domain, RBD"/>
    <property type="match status" value="1"/>
</dbReference>
<dbReference type="PROSITE" id="PS50102">
    <property type="entry name" value="RRM"/>
    <property type="match status" value="1"/>
</dbReference>
<dbReference type="PROSITE" id="PS50171">
    <property type="entry name" value="ZF_MATRIN"/>
    <property type="match status" value="1"/>
</dbReference>
<comment type="function">
    <text evidence="2 7 8 9 10 11 12 13 14">RNA-binding protein that acts as a regulator of mRNA splicing of a subset of genes encoding key structural proteins involved in cardiac development, such as TTN (Titin), CACNA1C, CAMK2D or PDLIM5/ENH (PubMed:22466703, PubMed:23307558, PubMed:24367651, PubMed:24960161, PubMed:25573899, PubMed:27289039, PubMed:33805770, PubMed:35394688). Acts as a repressor of mRNA splicing: specifically binds the 5'UCUU-3' motif that is predominantly found within intronic sequences of pre-mRNAs, leading to the exclusion of specific exons in target transcripts (PubMed:23307558, PubMed:24367651, PubMed:24960161, PubMed:25573899). RBM20-mediated exon skipping is hormone-dependent and is essential for TTN isoform transition in both cardiac and skeletal muscles (PubMed:23307558, PubMed:24367651, PubMed:24960161, PubMed:25573899, PubMed:33805770, PubMed:35394688). RBM20-mediated exon skipping of TTN provides substrates for the formation of circular RNA (circRNAs) from the TTN transcripts (By similarity). Together with RBM24, promotes the expression of short isoforms of PDLIM5/ENH in cardiomyocytes (PubMed:27289039).</text>
</comment>
<comment type="subunit">
    <text evidence="2">Associates with components of the U1 and U2 U1 small nuclear ribonucleoprotein complexes.</text>
</comment>
<comment type="subcellular location">
    <subcellularLocation>
        <location evidence="4 8 14">Nucleus</location>
    </subcellularLocation>
    <subcellularLocation>
        <location evidence="14">Cytoplasm</location>
        <location evidence="14">Cytoplasmic ribonucleoprotein granule</location>
    </subcellularLocation>
    <text evidence="2 14">The active form that regulates alternative splicing localizes to the nucleus (PubMed:35394688). Also localizes to cytoplasmic ribonucleoprotein granules; localization to cytoplasmic ribonucleoprotein granules plays an important regulatory role (By similarity). Subcellular localization is regulated by phosphorylation of different parts of the protein: while phosphorylation of the RS (arginine/serine-rich) region promotes nuclear localization, phosphorylation of the C-terminal disordered region promotes localization to cytoplasmic ribonucleoprotein granules (PubMed:35394688).</text>
</comment>
<comment type="PTM">
    <text evidence="2 14">Phosphorylation regulates the subcellular localization. Phosphorylation of Ser-638 and Ser-640 in the RS (arginine/serine-rich) region promotes nuclear localization of the protein (PubMed:35394688). In contrast, phosphorylation of the C-terminal disordered region promotes localization to cytoplasmic ribonucleoprotein granules (By similarity).</text>
</comment>
<comment type="disruption phenotype">
    <text evidence="7 9">Heterozygous or homozygous adults display left ventricular dilatation (PubMed:22466703, PubMed:24367651). Left ventricular diastolic diameters are significantly larger, although there is no differences in the systolic ventricular dimensions or contractility indices (PubMed:22466703). Subendocardial fibrosis increases with age and was accompanied by electrical abnormalities, such as widening of the QRS complex, atrioventricular conduction delay and a predisposition to arrhythmia (PubMed:22466703). Rats are at risk of sudden death caused by heart failure (PubMed:22466703, PubMed:24367651).</text>
</comment>
<name>RBM20_RAT</name>
<organism>
    <name type="scientific">Rattus norvegicus</name>
    <name type="common">Rat</name>
    <dbReference type="NCBI Taxonomy" id="10116"/>
    <lineage>
        <taxon>Eukaryota</taxon>
        <taxon>Metazoa</taxon>
        <taxon>Chordata</taxon>
        <taxon>Craniata</taxon>
        <taxon>Vertebrata</taxon>
        <taxon>Euteleostomi</taxon>
        <taxon>Mammalia</taxon>
        <taxon>Eutheria</taxon>
        <taxon>Euarchontoglires</taxon>
        <taxon>Glires</taxon>
        <taxon>Rodentia</taxon>
        <taxon>Myomorpha</taxon>
        <taxon>Muroidea</taxon>
        <taxon>Muridae</taxon>
        <taxon>Murinae</taxon>
        <taxon>Rattus</taxon>
    </lineage>
</organism>
<sequence>MVLAAAMSQDADPSGPEQPDRDACIVPGVQGPPAPQGQQGMQPLPPPLPPPPQPQSSLPQIIQNAAKLLDKNPFSVSSQNPLLTSPASVQLAQIQAQLTLHRLKMAQTAVTNNTAAATVLNQVLSKVAMSQPLFNQLRHPSVLGTTHGPTGVSQHAATVPSAHFPSTAIAFSPPSQAGGPGPSVSLPSQPPNAMVVHTFSGVVPQTPAQPAVILSIGKAGPTPATTGFYDYGKANPGQAYGSETEGQPGFLPASASAAASGGVTYEGHYSHTGQDGQATFSKDFYGPSAQGSHAAGGFPADQAGSMKGDVGGLLQGTNSQWERPSGFSGQNKADITAGPGLWAPPASQPYELYDPEEPTSDRAPPAFGSRLNNSKQGFNCSCRRTKEGQAMLSVRPLQGHQLNDFRGLAPLHLPHICSICDKKVFDLKDWELHVKGKLHAQKCLLFSESAGLRSICATGEGTLSASANSTAVYNPTGNEDYTSTLGTSYAAIPTRAFAQSNPMFPSASSGTNFAQRKGAGRVVHICNLPEGSCTENDVINLGLPFGKVTNYILMKSTNQAFLEMAYTEAAQAMVQYYQEKPALINGEKLLIRMSTRYKELQLKKPGKNVAAIIQDIHSQRERCMLREADRYGPERPRSRSPMSRSLSPRSHSPPGPSRADWGNGRDSYAWRDEDRETVPRRENGEDKRDRLDVWAHDRKHYPRQLDKAELDERLEGGRGYREKYLKSGSPGPLHSASGYKGREDGYHRKETKAKLDKHPKQQQQDVPGRSRRKEEARLREPRHPHPEDSGKEEDLEPKVTRAPEGTKSKQSEKSKTKRADRDQEGADDKKEGRGAENEAGTEEQEGMEESPASVGTQQEGTESSDPENTRTKKGQDCDSGSEPEGDNWYPTNMEELVTVDEVGEEDFIMEPDIPELEEIVPIDQKDKILPEICPCVTATLGLDLAKDFTKQGETLGNGDAELSPKLPGQVPSTSTSCPNDTDMEMAGLNLDAERKPAESETGLSPEVSNCYEKEARGAEGSDVRLAPAAQRMSSPQPADERAQQSSPFLDDCKARGSPEDGPHEVSPLEEKASPTTESDLQSQACQENSRYTETRSLNSRSPEFTEAELKEPLSLPSWEPEVFSELSIPLGVEFVVPRTGFYCKLCGLFYTSEEAAKVSHCRSTVHYRNLQKYLSQLAEEGLKETEGVDSPSPERSGIGPHLERKKL</sequence>
<feature type="chain" id="PRO_0000419984" description="RNA-binding protein 20">
    <location>
        <begin position="1"/>
        <end position="1207"/>
    </location>
</feature>
<feature type="domain" description="RRM" evidence="5">
    <location>
        <begin position="521"/>
        <end position="596"/>
    </location>
</feature>
<feature type="zinc finger region" description="U1-type" evidence="3">
    <location>
        <begin position="412"/>
        <end position="446"/>
    </location>
</feature>
<feature type="zinc finger region" description="Matrin-type" evidence="4">
    <location>
        <begin position="1141"/>
        <end position="1172"/>
    </location>
</feature>
<feature type="region of interest" description="Disordered" evidence="6">
    <location>
        <begin position="1"/>
        <end position="58"/>
    </location>
</feature>
<feature type="region of interest" description="Disordered" evidence="6">
    <location>
        <begin position="625"/>
        <end position="686"/>
    </location>
</feature>
<feature type="region of interest" description="RS" evidence="2">
    <location>
        <begin position="631"/>
        <end position="650"/>
    </location>
</feature>
<feature type="region of interest" description="Disordered" evidence="6">
    <location>
        <begin position="722"/>
        <end position="896"/>
    </location>
</feature>
<feature type="region of interest" description="Disordered" evidence="6">
    <location>
        <begin position="951"/>
        <end position="1110"/>
    </location>
</feature>
<feature type="region of interest" description="Disordered" evidence="6">
    <location>
        <begin position="1181"/>
        <end position="1207"/>
    </location>
</feature>
<feature type="compositionally biased region" description="Pro residues" evidence="6">
    <location>
        <begin position="43"/>
        <end position="54"/>
    </location>
</feature>
<feature type="compositionally biased region" description="Basic and acidic residues" evidence="6">
    <location>
        <begin position="625"/>
        <end position="637"/>
    </location>
</feature>
<feature type="compositionally biased region" description="Low complexity" evidence="6">
    <location>
        <begin position="639"/>
        <end position="650"/>
    </location>
</feature>
<feature type="compositionally biased region" description="Basic and acidic residues" evidence="6">
    <location>
        <begin position="668"/>
        <end position="686"/>
    </location>
</feature>
<feature type="compositionally biased region" description="Basic and acidic residues" evidence="6">
    <location>
        <begin position="740"/>
        <end position="759"/>
    </location>
</feature>
<feature type="compositionally biased region" description="Basic and acidic residues" evidence="6">
    <location>
        <begin position="772"/>
        <end position="789"/>
    </location>
</feature>
<feature type="compositionally biased region" description="Basic and acidic residues" evidence="6">
    <location>
        <begin position="796"/>
        <end position="836"/>
    </location>
</feature>
<feature type="compositionally biased region" description="Acidic residues" evidence="6">
    <location>
        <begin position="839"/>
        <end position="848"/>
    </location>
</feature>
<feature type="compositionally biased region" description="Polar residues" evidence="6">
    <location>
        <begin position="853"/>
        <end position="863"/>
    </location>
</feature>
<feature type="compositionally biased region" description="Basic and acidic residues" evidence="6">
    <location>
        <begin position="867"/>
        <end position="876"/>
    </location>
</feature>
<feature type="compositionally biased region" description="Polar residues" evidence="6">
    <location>
        <begin position="970"/>
        <end position="979"/>
    </location>
</feature>
<feature type="compositionally biased region" description="Basic and acidic residues" evidence="6">
    <location>
        <begin position="1011"/>
        <end position="1022"/>
    </location>
</feature>
<feature type="compositionally biased region" description="Basic and acidic residues" evidence="6">
    <location>
        <begin position="1050"/>
        <end position="1072"/>
    </location>
</feature>
<feature type="compositionally biased region" description="Polar residues" evidence="6">
    <location>
        <begin position="1073"/>
        <end position="1102"/>
    </location>
</feature>
<feature type="modified residue" description="Phosphoserine" evidence="14">
    <location>
        <position position="638"/>
    </location>
</feature>
<feature type="modified residue" description="Phosphoserine" evidence="14">
    <location>
        <position position="640"/>
    </location>
</feature>
<feature type="modified residue" description="Phosphoserine" evidence="14">
    <location>
        <position position="643"/>
    </location>
</feature>
<feature type="modified residue" description="Phosphoserine" evidence="14">
    <location>
        <position position="645"/>
    </location>
</feature>
<feature type="modified residue" description="Phosphoserine" evidence="14">
    <location>
        <position position="652"/>
    </location>
</feature>
<feature type="modified residue" description="Phosphoserine" evidence="14">
    <location>
        <position position="729"/>
    </location>
</feature>
<feature type="modified residue" description="Phosphoserine" evidence="14">
    <location>
        <position position="789"/>
    </location>
</feature>
<feature type="modified residue" description="Phosphoserine" evidence="2">
    <location>
        <position position="853"/>
    </location>
</feature>
<feature type="modified residue" description="Phosphoserine" evidence="2">
    <location>
        <position position="864"/>
    </location>
</feature>
<feature type="modified residue" description="Phosphoserine" evidence="14">
    <location>
        <position position="879"/>
    </location>
</feature>
<feature type="modified residue" description="Phosphoserine" evidence="14">
    <location>
        <position position="881"/>
    </location>
</feature>
<feature type="modified residue" description="Phosphoserine" evidence="18">
    <location>
        <position position="963"/>
    </location>
</feature>
<feature type="modified residue" description="Phosphoserine" evidence="14">
    <location>
        <position position="999"/>
    </location>
</feature>
<feature type="modified residue" description="Phosphoserine" evidence="14">
    <location>
        <position position="1034"/>
    </location>
</feature>
<feature type="modified residue" description="Phosphoserine" evidence="14">
    <location>
        <position position="1046"/>
    </location>
</feature>
<feature type="modified residue" description="Phosphoserine" evidence="14 18">
    <location>
        <position position="1057"/>
    </location>
</feature>
<feature type="modified residue" description="Phosphoserine" evidence="1">
    <location>
        <position position="1066"/>
    </location>
</feature>
<feature type="modified residue" description="Phosphoserine" evidence="1">
    <location>
        <position position="1078"/>
    </location>
</feature>
<feature type="modified residue" description="Phosphoserine" evidence="14 18">
    <location>
        <position position="1096"/>
    </location>
</feature>
<feature type="modified residue" description="Phosphoserine" evidence="18">
    <location>
        <position position="1101"/>
    </location>
</feature>
<feature type="modified residue" description="Phosphoserine" evidence="14">
    <location>
        <position position="1190"/>
    </location>
</feature>
<feature type="modified residue" description="Phosphoserine" evidence="14 18">
    <location>
        <position position="1192"/>
    </location>
</feature>
<feature type="mutagenesis site" description="Impaired ability to regulate alternative splicing of Ttn (Titin) mRNAs. Decreased localization to the nucleus associated with an increased localization to cytoplasmic ribonucleoprotein granules." evidence="14">
    <original>S</original>
    <variation>A</variation>
    <location>
        <position position="638"/>
    </location>
</feature>
<feature type="mutagenesis site" description="Mimics phosphorylation; does not restore nuclear localization." evidence="14">
    <original>S</original>
    <variation>D</variation>
    <location>
        <position position="638"/>
    </location>
</feature>
<feature type="mutagenesis site" description="Mimics phosphorylation; does not restore nuclear localization." evidence="14">
    <original>S</original>
    <variation>D</variation>
    <location>
        <position position="640"/>
    </location>
</feature>
<feature type="mutagenesis site" description="Impaired ability to regulate alternative splicing of Ttn (Titin) mRNAs. Decreased localization to the nucleus associated with an increased localization to cytoplasmic ribonucleoprotein granules." evidence="14">
    <original>S</original>
    <variation>G</variation>
    <location>
        <position position="640"/>
    </location>
</feature>
<feature type="mutagenesis site" description="No effect; does not affect ability to regulate alternative splicing." evidence="14">
    <original>S</original>
    <variation>A</variation>
    <location>
        <position position="643"/>
    </location>
</feature>
<feature type="mutagenesis site" description="No effect; does not affect ability to regulate alternative splicing." evidence="14">
    <original>S</original>
    <variation>A</variation>
    <location>
        <position position="645"/>
    </location>
</feature>
<feature type="mutagenesis site" description="No effect; does not affect ability to regulate alternative splicing." evidence="14">
    <original>S</original>
    <variation>A</variation>
    <location>
        <position position="652"/>
    </location>
</feature>
<feature type="mutagenesis site" description="No effect; does not affect ability to regulate alternative splicing." evidence="14">
    <original>S</original>
    <variation>A</variation>
    <location>
        <position position="729"/>
    </location>
</feature>
<feature type="mutagenesis site" description="No effect; does not affect ability to regulate alternative splicing." evidence="14">
    <original>S</original>
    <variation>A</variation>
    <location>
        <position position="789"/>
    </location>
</feature>
<feature type="mutagenesis site" description="No effect; does not affect ability to regulate alternative splicing." evidence="14">
    <original>S</original>
    <variation>A</variation>
    <location>
        <position position="879"/>
    </location>
</feature>
<feature type="mutagenesis site" description="No effect; does not affect ability to regulate alternative splicing." evidence="14">
    <original>S</original>
    <variation>A</variation>
    <location>
        <position position="881"/>
    </location>
</feature>
<feature type="mutagenesis site" description="No effect; does not affect ability to regulate alternative splicing." evidence="14">
    <original>S</original>
    <variation>A</variation>
    <location>
        <position position="999"/>
    </location>
</feature>
<feature type="mutagenesis site" description="No effect; does not affect ability to regulate alternative splicing." evidence="14">
    <original>S</original>
    <variation>A</variation>
    <location>
        <position position="1034"/>
    </location>
</feature>
<feature type="mutagenesis site" description="No effect; does not affect ability to regulate alternative splicing." evidence="14">
    <original>S</original>
    <variation>A</variation>
    <location>
        <position position="1046"/>
    </location>
</feature>
<feature type="mutagenesis site" description="No effect; does not affect ability to regulate alternative splicing." evidence="14">
    <original>S</original>
    <variation>A</variation>
    <location>
        <position position="1057"/>
    </location>
</feature>
<feature type="mutagenesis site" description="No effect; does not affect ability to regulate alternative splicing." evidence="14">
    <original>S</original>
    <variation>A</variation>
    <location>
        <position position="1096"/>
    </location>
</feature>
<feature type="mutagenesis site" description="No effect; does not affect ability to regulate alternative splicing." evidence="14">
    <original>S</original>
    <variation>A</variation>
    <location>
        <position position="1190"/>
    </location>
</feature>
<feature type="mutagenesis site" description="No effect; does not affect ability to regulate alternative splicing." evidence="14">
    <original>S</original>
    <variation>A</variation>
    <location>
        <position position="1192"/>
    </location>
</feature>
<feature type="sequence conflict" description="In Ref. 1; ACD80091." evidence="16" ref="1">
    <original>Q</original>
    <variation>R</variation>
    <location>
        <position position="1043"/>
    </location>
</feature>
<keyword id="KW-0963">Cytoplasm</keyword>
<keyword id="KW-0479">Metal-binding</keyword>
<keyword id="KW-0507">mRNA processing</keyword>
<keyword id="KW-0508">mRNA splicing</keyword>
<keyword id="KW-0539">Nucleus</keyword>
<keyword id="KW-0597">Phosphoprotein</keyword>
<keyword id="KW-1185">Reference proteome</keyword>
<keyword id="KW-0694">RNA-binding</keyword>
<keyword id="KW-0862">Zinc</keyword>
<keyword id="KW-0863">Zinc-finger</keyword>
<gene>
    <name evidence="15 17" type="primary">Rbm20</name>
</gene>